<sequence length="213" mass="22865">MTIRHHVSDALLTAYAAGTLSEAFSLVVATHLSLCDECRARAGALDAVGGSLMEETAPVALSEGSLASVMAQLDRQIQRPAPARRADPRAPAPLADYVGRRLEDVRWRTLGGGVRQAILPTGGEAIARLLWIPGGQAVPDHGHRGLELTLVLQGAFRDETDRFGAGDIEIADQELEHTPVAERGLDCICLAATDAPLRFNSFLPKLVQPFFRI</sequence>
<evidence type="ECO:0000269" key="1">
    <source>
    </source>
</evidence>
<evidence type="ECO:0000269" key="2">
    <source>
    </source>
</evidence>
<evidence type="ECO:0000269" key="3">
    <source>
    </source>
</evidence>
<evidence type="ECO:0000269" key="4">
    <source>
    </source>
</evidence>
<evidence type="ECO:0000269" key="5">
    <source>
    </source>
</evidence>
<evidence type="ECO:0000305" key="6"/>
<evidence type="ECO:0007829" key="7">
    <source>
        <dbReference type="PDB" id="2Q1Z"/>
    </source>
</evidence>
<evidence type="ECO:0007829" key="8">
    <source>
        <dbReference type="PDB" id="2Z2S"/>
    </source>
</evidence>
<organism>
    <name type="scientific">Cereibacter sphaeroides (strain ATCC 17023 / DSM 158 / JCM 6121 / CCUG 31486 / LMG 2827 / NBRC 12203 / NCIMB 8253 / ATH 2.4.1.)</name>
    <name type="common">Rhodobacter sphaeroides</name>
    <dbReference type="NCBI Taxonomy" id="272943"/>
    <lineage>
        <taxon>Bacteria</taxon>
        <taxon>Pseudomonadati</taxon>
        <taxon>Pseudomonadota</taxon>
        <taxon>Alphaproteobacteria</taxon>
        <taxon>Rhodobacterales</taxon>
        <taxon>Paracoccaceae</taxon>
        <taxon>Cereibacter</taxon>
    </lineage>
</organism>
<feature type="initiator methionine" description="Removed" evidence="1">
    <location>
        <position position="1"/>
    </location>
</feature>
<feature type="chain" id="PRO_0000089658" description="Anti-sigma-E factor ChrR">
    <location>
        <begin position="2"/>
        <end position="213"/>
    </location>
</feature>
<feature type="region of interest" description="Sufficient to bind sigma factor and inhibit its activity">
    <location>
        <begin position="2"/>
        <end position="85"/>
    </location>
</feature>
<feature type="region of interest" description="Required for response to singlet oxygen">
    <location>
        <begin position="86"/>
        <end position="194"/>
    </location>
</feature>
<feature type="binding site">
    <location>
        <position position="6"/>
    </location>
    <ligand>
        <name>Zn(2+)</name>
        <dbReference type="ChEBI" id="CHEBI:29105"/>
        <label>1</label>
    </ligand>
</feature>
<feature type="binding site">
    <location>
        <position position="31"/>
    </location>
    <ligand>
        <name>Zn(2+)</name>
        <dbReference type="ChEBI" id="CHEBI:29105"/>
        <label>1</label>
    </ligand>
</feature>
<feature type="binding site">
    <location>
        <position position="35"/>
    </location>
    <ligand>
        <name>Zn(2+)</name>
        <dbReference type="ChEBI" id="CHEBI:29105"/>
        <label>1</label>
    </ligand>
</feature>
<feature type="binding site">
    <location>
        <position position="38"/>
    </location>
    <ligand>
        <name>Zn(2+)</name>
        <dbReference type="ChEBI" id="CHEBI:29105"/>
        <label>1</label>
    </ligand>
</feature>
<feature type="binding site">
    <location>
        <position position="141"/>
    </location>
    <ligand>
        <name>Zn(2+)</name>
        <dbReference type="ChEBI" id="CHEBI:29105"/>
        <label>2</label>
    </ligand>
</feature>
<feature type="binding site">
    <location>
        <position position="143"/>
    </location>
    <ligand>
        <name>Zn(2+)</name>
        <dbReference type="ChEBI" id="CHEBI:29105"/>
        <label>2</label>
    </ligand>
</feature>
<feature type="binding site">
    <location>
        <position position="147"/>
    </location>
    <ligand>
        <name>Zn(2+)</name>
        <dbReference type="ChEBI" id="CHEBI:29105"/>
        <label>2</label>
    </ligand>
</feature>
<feature type="binding site">
    <location>
        <position position="177"/>
    </location>
    <ligand>
        <name>Zn(2+)</name>
        <dbReference type="ChEBI" id="CHEBI:29105"/>
        <label>2</label>
    </ligand>
</feature>
<feature type="mutagenesis site" description="No effect on anti-sigma function." evidence="4">
    <original>H</original>
    <variation>A</variation>
    <location>
        <position position="5"/>
    </location>
</feature>
<feature type="mutagenesis site" description="Loss of anti-sigma function." evidence="4">
    <original>H</original>
    <variation>A</variation>
    <location>
        <position position="6"/>
    </location>
</feature>
<feature type="mutagenesis site" description="No effect on anti-sigma function." evidence="4">
    <original>H</original>
    <variation>A</variation>
    <location>
        <position position="31"/>
    </location>
</feature>
<feature type="mutagenesis site" description="Loss of anti-sigma function." evidence="2 4">
    <original>C</original>
    <variation>A</variation>
    <location>
        <position position="35"/>
    </location>
</feature>
<feature type="mutagenesis site" description="Loss of function; no effect on zinc binding." evidence="2 4">
    <original>C</original>
    <variation>S</variation>
    <location>
        <position position="35"/>
    </location>
</feature>
<feature type="mutagenesis site" description="Loss of anti-sigma function." evidence="2 4 5">
    <original>C</original>
    <variation>A</variation>
    <location>
        <position position="38"/>
    </location>
</feature>
<feature type="mutagenesis site" description="In Chr4 mutant; loss of function." evidence="2 4 5">
    <original>C</original>
    <variation>R</variation>
    <location>
        <position position="38"/>
    </location>
</feature>
<feature type="mutagenesis site" description="Loss of ability to bind zinc." evidence="2 4 5">
    <original>C</original>
    <variation>S</variation>
    <location>
        <position position="38"/>
    </location>
</feature>
<feature type="mutagenesis site" description="No effect on zinc binding." evidence="2">
    <original>C</original>
    <variation>S</variation>
    <location>
        <position position="187"/>
    </location>
</feature>
<feature type="mutagenesis site" description="No effect on zinc binding." evidence="2">
    <original>C</original>
    <variation>S</variation>
    <location>
        <position position="189"/>
    </location>
</feature>
<feature type="helix" evidence="7">
    <location>
        <begin position="9"/>
        <end position="17"/>
    </location>
</feature>
<feature type="helix" evidence="7">
    <location>
        <begin position="22"/>
        <end position="34"/>
    </location>
</feature>
<feature type="helix" evidence="7">
    <location>
        <begin position="36"/>
        <end position="54"/>
    </location>
</feature>
<feature type="helix" evidence="7">
    <location>
        <begin position="65"/>
        <end position="71"/>
    </location>
</feature>
<feature type="helix" evidence="7">
    <location>
        <begin position="94"/>
        <end position="98"/>
    </location>
</feature>
<feature type="helix" evidence="8">
    <location>
        <begin position="102"/>
        <end position="104"/>
    </location>
</feature>
<feature type="strand" evidence="7">
    <location>
        <begin position="111"/>
        <end position="113"/>
    </location>
</feature>
<feature type="strand" evidence="7">
    <location>
        <begin position="115"/>
        <end position="119"/>
    </location>
</feature>
<feature type="strand" evidence="7">
    <location>
        <begin position="122"/>
        <end position="132"/>
    </location>
</feature>
<feature type="strand" evidence="7">
    <location>
        <begin position="147"/>
        <end position="157"/>
    </location>
</feature>
<feature type="strand" evidence="7">
    <location>
        <begin position="159"/>
        <end position="164"/>
    </location>
</feature>
<feature type="strand" evidence="7">
    <location>
        <begin position="168"/>
        <end position="171"/>
    </location>
</feature>
<feature type="strand" evidence="7">
    <location>
        <begin position="183"/>
        <end position="185"/>
    </location>
</feature>
<feature type="strand" evidence="7">
    <location>
        <begin position="187"/>
        <end position="193"/>
    </location>
</feature>
<comment type="function">
    <text evidence="2 3 4">Anti-sigma factor that inhibits the activity of the extracytoplasmic function (ECF) sigma-E factor (RpoE), thereby indirectly regulating the transcription of the cycA and rpoE genes. ECF sigma factors are held in an inactive form by a cognate anti-sigma factor.</text>
</comment>
<comment type="cofactor">
    <cofactor evidence="2">
        <name>Zn(2+)</name>
        <dbReference type="ChEBI" id="CHEBI:29105"/>
    </cofactor>
    <text evidence="2">Binds 2 Zn(2+) ion per subunit. The Zn(2+) bound by the N-terminus is required for anti-sigma function, the function of the Zn(2+) bound by the C-terminus is unknown.</text>
</comment>
<comment type="subunit">
    <text evidence="2">Forms a 1:1 complex with cognate ECF RNA polymerase sigma factor RpoE; this inhibits the interaction of RpoE with the RNA polymerase catalytic core.</text>
</comment>
<comment type="induction">
    <text evidence="4">Induced by singlet oxygen. Autoregulated. Part of the rpoE-chrR operon.</text>
</comment>
<comment type="domain">
    <text evidence="4">The N-terminal anti-sigma domain (residues 1-85) is necessary and sufficient to bind sigma-E and inhibit its activity. The C-terminal domain (residues 86-194) is required to respond to singlet oxygen (PubMed:17803943).</text>
</comment>
<comment type="disruption phenotype">
    <text evidence="3 4">For single chrR mutant about 12-fold increase in rpoE-regulated genes. For double rpoE-chrR deletion mutant no effect on anaerobic photosynthetic growth. In illuminated aerobically growing cells double deletion is bacteriostatic.</text>
</comment>
<comment type="similarity">
    <text evidence="6">Belongs to the zinc-associated anti-sigma factor (ZAS) superfamily.</text>
</comment>
<proteinExistence type="evidence at protein level"/>
<accession>P40685</accession>
<accession>Q3IYV5</accession>
<keyword id="KW-0002">3D-structure</keyword>
<keyword id="KW-0010">Activator</keyword>
<keyword id="KW-0903">Direct protein sequencing</keyword>
<keyword id="KW-0238">DNA-binding</keyword>
<keyword id="KW-0479">Metal-binding</keyword>
<keyword id="KW-1185">Reference proteome</keyword>
<keyword id="KW-0804">Transcription</keyword>
<keyword id="KW-0805">Transcription regulation</keyword>
<keyword id="KW-0862">Zinc</keyword>
<dbReference type="EMBL" id="U11283">
    <property type="protein sequence ID" value="AAB17905.1"/>
    <property type="molecule type" value="Genomic_DNA"/>
</dbReference>
<dbReference type="EMBL" id="CP000143">
    <property type="protein sequence ID" value="ABA80279.1"/>
    <property type="molecule type" value="Genomic_DNA"/>
</dbReference>
<dbReference type="PIR" id="B58883">
    <property type="entry name" value="B58883"/>
</dbReference>
<dbReference type="RefSeq" id="WP_011338712.1">
    <property type="nucleotide sequence ID" value="NC_007493.2"/>
</dbReference>
<dbReference type="RefSeq" id="YP_354180.1">
    <property type="nucleotide sequence ID" value="NC_007493.2"/>
</dbReference>
<dbReference type="PDB" id="2Q1Z">
    <property type="method" value="X-ray"/>
    <property type="resolution" value="2.40 A"/>
    <property type="chains" value="B/D=1-195"/>
</dbReference>
<dbReference type="PDB" id="2Z2S">
    <property type="method" value="X-ray"/>
    <property type="resolution" value="2.70 A"/>
    <property type="chains" value="B/D/F/H=1-203"/>
</dbReference>
<dbReference type="PDBsum" id="2Q1Z"/>
<dbReference type="PDBsum" id="2Z2S"/>
<dbReference type="SMR" id="P40685"/>
<dbReference type="STRING" id="272943.RSP_1093"/>
<dbReference type="EnsemblBacteria" id="ABA80279">
    <property type="protein sequence ID" value="ABA80279"/>
    <property type="gene ID" value="RSP_1093"/>
</dbReference>
<dbReference type="GeneID" id="3720852"/>
<dbReference type="KEGG" id="rsp:RSP_1093"/>
<dbReference type="PATRIC" id="fig|272943.9.peg.3072"/>
<dbReference type="eggNOG" id="COG3806">
    <property type="taxonomic scope" value="Bacteria"/>
</dbReference>
<dbReference type="OrthoDB" id="2988517at2"/>
<dbReference type="PhylomeDB" id="P40685"/>
<dbReference type="EvolutionaryTrace" id="P40685"/>
<dbReference type="Proteomes" id="UP000002703">
    <property type="component" value="Chromosome 1"/>
</dbReference>
<dbReference type="GO" id="GO:0003677">
    <property type="term" value="F:DNA binding"/>
    <property type="evidence" value="ECO:0007669"/>
    <property type="project" value="UniProtKB-KW"/>
</dbReference>
<dbReference type="GO" id="GO:0046872">
    <property type="term" value="F:metal ion binding"/>
    <property type="evidence" value="ECO:0007669"/>
    <property type="project" value="UniProtKB-KW"/>
</dbReference>
<dbReference type="CDD" id="cd20301">
    <property type="entry name" value="cupin_ChrR"/>
    <property type="match status" value="1"/>
</dbReference>
<dbReference type="Gene3D" id="1.10.10.1320">
    <property type="entry name" value="Anti-sigma factor, zinc-finger domain"/>
    <property type="match status" value="1"/>
</dbReference>
<dbReference type="Gene3D" id="2.60.120.10">
    <property type="entry name" value="Jelly Rolls"/>
    <property type="match status" value="1"/>
</dbReference>
<dbReference type="InterPro" id="IPR012807">
    <property type="entry name" value="Anti-sigma_ChrR"/>
</dbReference>
<dbReference type="InterPro" id="IPR041916">
    <property type="entry name" value="Anti_sigma_zinc_sf"/>
</dbReference>
<dbReference type="InterPro" id="IPR025979">
    <property type="entry name" value="ChrR-like_cupin_dom"/>
</dbReference>
<dbReference type="InterPro" id="IPR014710">
    <property type="entry name" value="RmlC-like_jellyroll"/>
</dbReference>
<dbReference type="InterPro" id="IPR011051">
    <property type="entry name" value="RmlC_Cupin_sf"/>
</dbReference>
<dbReference type="InterPro" id="IPR027383">
    <property type="entry name" value="Znf_put"/>
</dbReference>
<dbReference type="NCBIfam" id="TIGR02451">
    <property type="entry name" value="anti_sig_ChrR"/>
    <property type="match status" value="1"/>
</dbReference>
<dbReference type="Pfam" id="PF12973">
    <property type="entry name" value="Cupin_7"/>
    <property type="match status" value="1"/>
</dbReference>
<dbReference type="Pfam" id="PF13490">
    <property type="entry name" value="zf-HC2"/>
    <property type="match status" value="1"/>
</dbReference>
<dbReference type="SUPFAM" id="SSF51182">
    <property type="entry name" value="RmlC-like cupins"/>
    <property type="match status" value="1"/>
</dbReference>
<gene>
    <name type="primary">chrR</name>
    <name type="ordered locus">RHOS4_27110</name>
    <name type="ORF">RSP_1093</name>
</gene>
<name>CHRR_CERS4</name>
<protein>
    <recommendedName>
        <fullName>Anti-sigma-E factor ChrR</fullName>
    </recommendedName>
    <alternativeName>
        <fullName>Sigma-E anti-sigma factor ChrR</fullName>
    </alternativeName>
    <alternativeName>
        <fullName>Transcriptional activator ChrR</fullName>
    </alternativeName>
</protein>
<reference key="1">
    <citation type="journal article" date="1995" name="J. Bacteriol.">
        <title>ChrR positively regulates transcription of the Rhodobacter sphaeroides cytochrome c2 gene.</title>
        <authorList>
            <person name="Schilke B.A."/>
            <person name="Donohue T.J."/>
        </authorList>
    </citation>
    <scope>NUCLEOTIDE SEQUENCE [GENOMIC DNA]</scope>
    <scope>MUTAGENESIS OF CYS-38</scope>
    <source>
        <strain>ATCC 17023 / DSM 158 / JCM 6121 / CCUG 31486 / LMG 2827 / NBRC 12203 / NCIMB 8253 / ATH 2.4.1.</strain>
    </source>
</reference>
<reference key="2">
    <citation type="submission" date="1996-11" db="EMBL/GenBank/DDBJ databases">
        <authorList>
            <person name="Newman J."/>
            <person name="Donohue T.J."/>
        </authorList>
    </citation>
    <scope>SEQUENCE REVISION</scope>
</reference>
<reference key="3">
    <citation type="submission" date="2005-09" db="EMBL/GenBank/DDBJ databases">
        <title>Complete sequence of chromosome 1 of Rhodobacter sphaeroides 2.4.1.</title>
        <authorList>
            <person name="Copeland A."/>
            <person name="Lucas S."/>
            <person name="Lapidus A."/>
            <person name="Barry K."/>
            <person name="Detter J.C."/>
            <person name="Glavina T."/>
            <person name="Hammon N."/>
            <person name="Israni S."/>
            <person name="Pitluck S."/>
            <person name="Richardson P."/>
            <person name="Mackenzie C."/>
            <person name="Choudhary M."/>
            <person name="Larimer F."/>
            <person name="Hauser L.J."/>
            <person name="Land M."/>
            <person name="Donohue T.J."/>
            <person name="Kaplan S."/>
        </authorList>
    </citation>
    <scope>NUCLEOTIDE SEQUENCE [LARGE SCALE GENOMIC DNA]</scope>
    <source>
        <strain>ATCC 17023 / DSM 158 / JCM 6121 / CCUG 31486 / LMG 2827 / NBRC 12203 / NCIMB 8253 / ATH 2.4.1.</strain>
    </source>
</reference>
<reference key="4">
    <citation type="journal article" date="1999" name="J. Mol. Biol.">
        <title>The Rhodobacter sphaeroides ECF sigma factor, sigma(E), and the target promoters cycA P3 and rpoE P1.</title>
        <authorList>
            <person name="Newman J.D."/>
            <person name="Falkowski M.J."/>
            <person name="Schilke B.A."/>
            <person name="Anthony L.C."/>
            <person name="Donohue T.J."/>
        </authorList>
    </citation>
    <scope>PROTEIN SEQUENCE OF 2-13</scope>
    <source>
        <strain>ATCC 17023 / DSM 158 / JCM 6121 / CCUG 31486 / LMG 2827 / NBRC 12203 / NCIMB 8253 / ATH 2.4.1.</strain>
    </source>
</reference>
<reference key="5">
    <citation type="journal article" date="2001" name="J. Mol. Biol.">
        <title>The importance of zinc-binding to the function of Rhodobacter sphaeroides ChrR as an anti-sigma factor.</title>
        <authorList>
            <person name="Newman J.D."/>
            <person name="Anthony J.R."/>
            <person name="Donohue T.J."/>
        </authorList>
    </citation>
    <scope>FUNCTION AS AN ANTI-SIGMA FACTOR</scope>
    <scope>COFACTOR</scope>
    <scope>INTERACTION WITH SIGME-E (RPOE)</scope>
    <scope>SUBUNIT</scope>
    <scope>MUTAGENESIS OF CYS-35; CYS-38; CYS-187 AND CYS-189</scope>
    <source>
        <strain>ATCC 17023 / DSM 158 / JCM 6121 / CCUG 31486 / LMG 2827 / NBRC 12203 / NCIMB 8253 / ATH 2.4.1.</strain>
    </source>
</reference>
<reference key="6">
    <citation type="journal article" date="2005" name="Proc. Natl. Acad. Sci. U.S.A.">
        <title>A transcriptional response to singlet oxygen, a toxic byproduct of photosynthesis.</title>
        <authorList>
            <person name="Anthony J.R."/>
            <person name="Warczak K.L."/>
            <person name="Donohue T.J."/>
        </authorList>
    </citation>
    <scope>FUNCTION AS AN ANTI-SIGMA FACTOR</scope>
    <scope>DISRUPTION PHENOTYPE</scope>
    <source>
        <strain>ATCC 17023 / DSM 158 / JCM 6121 / CCUG 31486 / LMG 2827 / NBRC 12203 / NCIMB 8253 / ATH 2.4.1.</strain>
    </source>
</reference>
<reference key="7">
    <citation type="journal article" date="2007" name="Mol. Cell">
        <title>A conserved structural module regulates transcriptional responses to diverse stress signals in bacteria.</title>
        <authorList>
            <person name="Campbell E.A."/>
            <person name="Greenwell R."/>
            <person name="Anthony J.R."/>
            <person name="Wang S."/>
            <person name="Lim L."/>
            <person name="Das K."/>
            <person name="Sofia H.J."/>
            <person name="Donohue T.J."/>
            <person name="Darst S.A."/>
        </authorList>
    </citation>
    <scope>X-RAY CRYSTALLOGRAPHY (2.4 ANGSTROMS) OF 1-195</scope>
    <scope>FUNCTION AS AN ANTI-SIGMA FACTOR</scope>
    <scope>ZINC-BINDING</scope>
    <scope>INTERACTION WITH RPOE</scope>
    <scope>INDUCTION</scope>
    <scope>DISRUPTION PHENOTYPE</scope>
    <scope>MUTAGENESIS OF HIS-5; HIS-6; HIS-31; CYS-35 AND CYS-38</scope>
    <source>
        <strain>ATCC 17023 / DSM 158 / JCM 6121 / CCUG 31486 / LMG 2827 / NBRC 12203 / NCIMB 8253 / ATH 2.4.1.</strain>
    </source>
</reference>